<accession>B1IRN3</accession>
<proteinExistence type="inferred from homology"/>
<sequence length="378" mass="42331">MSHLDNGFRSLTLQRFPATDDVNPLQAWEAADEYLLQQLDDTEIRGPVLILNDAFGALSCALAEHKPYSIGDSYISELATRENLRLNGIDESSVKFLDSTADYPQQPGVVLIKVPKTLALLEQQLRALRKVVTSDTRIIAGAKARDIHTSTLELFEKVLGPTTTTLAWKKARLINCTFNEPQLADAPQTVSWKLEGTDWTIHNHANVFSRTGLDIGARFFMQHLPENLEGEIVDLGCGNGVIGLTLLDKNPQAKVVFVDESPMAVASSRLNVETNMPEALDRCEFMINNALSGVEPFRFNAVLCNPPFHQQHALTDNVAWEMFHHARRCLKINGELYIVANRHLDYFHKLKKIFGNCTTIATNNKFVVLKAVKLGRRR</sequence>
<gene>
    <name evidence="1" type="primary">rlmG</name>
    <name type="ordered locus">EcolC_0616</name>
</gene>
<comment type="function">
    <text evidence="1">Specifically methylates the guanine in position 1835 (m2G1835) of 23S rRNA.</text>
</comment>
<comment type="catalytic activity">
    <reaction evidence="1">
        <text>guanosine(1835) in 23S rRNA + S-adenosyl-L-methionine = N(2)-methylguanosine(1835) in 23S rRNA + S-adenosyl-L-homocysteine + H(+)</text>
        <dbReference type="Rhea" id="RHEA:42744"/>
        <dbReference type="Rhea" id="RHEA-COMP:10217"/>
        <dbReference type="Rhea" id="RHEA-COMP:10218"/>
        <dbReference type="ChEBI" id="CHEBI:15378"/>
        <dbReference type="ChEBI" id="CHEBI:57856"/>
        <dbReference type="ChEBI" id="CHEBI:59789"/>
        <dbReference type="ChEBI" id="CHEBI:74269"/>
        <dbReference type="ChEBI" id="CHEBI:74481"/>
        <dbReference type="EC" id="2.1.1.174"/>
    </reaction>
</comment>
<comment type="subcellular location">
    <subcellularLocation>
        <location evidence="1">Cytoplasm</location>
    </subcellularLocation>
</comment>
<comment type="similarity">
    <text evidence="1">Belongs to the methyltransferase superfamily. RlmG family.</text>
</comment>
<evidence type="ECO:0000255" key="1">
    <source>
        <dbReference type="HAMAP-Rule" id="MF_01859"/>
    </source>
</evidence>
<reference key="1">
    <citation type="submission" date="2008-02" db="EMBL/GenBank/DDBJ databases">
        <title>Complete sequence of Escherichia coli C str. ATCC 8739.</title>
        <authorList>
            <person name="Copeland A."/>
            <person name="Lucas S."/>
            <person name="Lapidus A."/>
            <person name="Glavina del Rio T."/>
            <person name="Dalin E."/>
            <person name="Tice H."/>
            <person name="Bruce D."/>
            <person name="Goodwin L."/>
            <person name="Pitluck S."/>
            <person name="Kiss H."/>
            <person name="Brettin T."/>
            <person name="Detter J.C."/>
            <person name="Han C."/>
            <person name="Kuske C.R."/>
            <person name="Schmutz J."/>
            <person name="Larimer F."/>
            <person name="Land M."/>
            <person name="Hauser L."/>
            <person name="Kyrpides N."/>
            <person name="Mikhailova N."/>
            <person name="Ingram L."/>
            <person name="Richardson P."/>
        </authorList>
    </citation>
    <scope>NUCLEOTIDE SEQUENCE [LARGE SCALE GENOMIC DNA]</scope>
    <source>
        <strain>ATCC 8739 / DSM 1576 / NBRC 3972 / NCIMB 8545 / WDCM 00012 / Crooks</strain>
    </source>
</reference>
<protein>
    <recommendedName>
        <fullName evidence="1">Ribosomal RNA large subunit methyltransferase G</fullName>
        <ecNumber evidence="1">2.1.1.174</ecNumber>
    </recommendedName>
    <alternativeName>
        <fullName evidence="1">23S rRNA m2G1835 methyltransferase</fullName>
    </alternativeName>
    <alternativeName>
        <fullName evidence="1">rRNA (guanine-N(2)-)-methyltransferase RlmG</fullName>
    </alternativeName>
</protein>
<keyword id="KW-0963">Cytoplasm</keyword>
<keyword id="KW-0489">Methyltransferase</keyword>
<keyword id="KW-0698">rRNA processing</keyword>
<keyword id="KW-0949">S-adenosyl-L-methionine</keyword>
<keyword id="KW-0808">Transferase</keyword>
<dbReference type="EC" id="2.1.1.174" evidence="1"/>
<dbReference type="EMBL" id="CP000946">
    <property type="protein sequence ID" value="ACA76292.1"/>
    <property type="molecule type" value="Genomic_DNA"/>
</dbReference>
<dbReference type="RefSeq" id="WP_000018695.1">
    <property type="nucleotide sequence ID" value="NZ_MTFT01000027.1"/>
</dbReference>
<dbReference type="SMR" id="B1IRN3"/>
<dbReference type="KEGG" id="ecl:EcolC_0616"/>
<dbReference type="HOGENOM" id="CLU_040288_4_0_6"/>
<dbReference type="GO" id="GO:0005737">
    <property type="term" value="C:cytoplasm"/>
    <property type="evidence" value="ECO:0007669"/>
    <property type="project" value="UniProtKB-SubCell"/>
</dbReference>
<dbReference type="GO" id="GO:0052916">
    <property type="term" value="F:23S rRNA (guanine(1835)-N(2))-methyltransferase activity"/>
    <property type="evidence" value="ECO:0007669"/>
    <property type="project" value="UniProtKB-EC"/>
</dbReference>
<dbReference type="GO" id="GO:0003676">
    <property type="term" value="F:nucleic acid binding"/>
    <property type="evidence" value="ECO:0007669"/>
    <property type="project" value="InterPro"/>
</dbReference>
<dbReference type="CDD" id="cd02440">
    <property type="entry name" value="AdoMet_MTases"/>
    <property type="match status" value="1"/>
</dbReference>
<dbReference type="FunFam" id="3.40.50.150:FF:000046">
    <property type="entry name" value="Ribosomal RNA large subunit methyltransferase G"/>
    <property type="match status" value="1"/>
</dbReference>
<dbReference type="FunFam" id="3.40.50.150:FF:000047">
    <property type="entry name" value="Ribosomal RNA large subunit methyltransferase G"/>
    <property type="match status" value="1"/>
</dbReference>
<dbReference type="Gene3D" id="3.40.50.150">
    <property type="entry name" value="Vaccinia Virus protein VP39"/>
    <property type="match status" value="2"/>
</dbReference>
<dbReference type="HAMAP" id="MF_01859">
    <property type="entry name" value="23SrRNA_methyltr_G"/>
    <property type="match status" value="1"/>
</dbReference>
<dbReference type="InterPro" id="IPR002052">
    <property type="entry name" value="DNA_methylase_N6_adenine_CS"/>
</dbReference>
<dbReference type="InterPro" id="IPR017237">
    <property type="entry name" value="rRNA_m2G-MeTrfase_RlmG"/>
</dbReference>
<dbReference type="InterPro" id="IPR046977">
    <property type="entry name" value="RsmC/RlmG"/>
</dbReference>
<dbReference type="InterPro" id="IPR029063">
    <property type="entry name" value="SAM-dependent_MTases_sf"/>
</dbReference>
<dbReference type="InterPro" id="IPR007848">
    <property type="entry name" value="Small_mtfrase_dom"/>
</dbReference>
<dbReference type="NCBIfam" id="NF011577">
    <property type="entry name" value="PRK15001.1"/>
    <property type="match status" value="1"/>
</dbReference>
<dbReference type="PANTHER" id="PTHR47816:SF5">
    <property type="entry name" value="RIBOSOMAL RNA LARGE SUBUNIT METHYLTRANSFERASE G"/>
    <property type="match status" value="1"/>
</dbReference>
<dbReference type="PANTHER" id="PTHR47816">
    <property type="entry name" value="RIBOSOMAL RNA SMALL SUBUNIT METHYLTRANSFERASE C"/>
    <property type="match status" value="1"/>
</dbReference>
<dbReference type="Pfam" id="PF05175">
    <property type="entry name" value="MTS"/>
    <property type="match status" value="1"/>
</dbReference>
<dbReference type="PIRSF" id="PIRSF037565">
    <property type="entry name" value="RRNA_m2G_Mtase_RsmD_prd"/>
    <property type="match status" value="1"/>
</dbReference>
<dbReference type="SUPFAM" id="SSF53335">
    <property type="entry name" value="S-adenosyl-L-methionine-dependent methyltransferases"/>
    <property type="match status" value="1"/>
</dbReference>
<organism>
    <name type="scientific">Escherichia coli (strain ATCC 8739 / DSM 1576 / NBRC 3972 / NCIMB 8545 / WDCM 00012 / Crooks)</name>
    <dbReference type="NCBI Taxonomy" id="481805"/>
    <lineage>
        <taxon>Bacteria</taxon>
        <taxon>Pseudomonadati</taxon>
        <taxon>Pseudomonadota</taxon>
        <taxon>Gammaproteobacteria</taxon>
        <taxon>Enterobacterales</taxon>
        <taxon>Enterobacteriaceae</taxon>
        <taxon>Escherichia</taxon>
    </lineage>
</organism>
<name>RLMG_ECOLC</name>
<feature type="chain" id="PRO_0000366455" description="Ribosomal RNA large subunit methyltransferase G">
    <location>
        <begin position="1"/>
        <end position="378"/>
    </location>
</feature>